<accession>B0TYE8</accession>
<reference key="1">
    <citation type="submission" date="2007-12" db="EMBL/GenBank/DDBJ databases">
        <title>Complete sequence of chromosome of Francisella philomiragia subsp. philomiragia ATCC 25017.</title>
        <authorList>
            <consortium name="US DOE Joint Genome Institute"/>
            <person name="Copeland A."/>
            <person name="Lucas S."/>
            <person name="Lapidus A."/>
            <person name="Barry K."/>
            <person name="Detter J.C."/>
            <person name="Glavina del Rio T."/>
            <person name="Hammon N."/>
            <person name="Israni S."/>
            <person name="Dalin E."/>
            <person name="Tice H."/>
            <person name="Pitluck S."/>
            <person name="Chain P."/>
            <person name="Malfatti S."/>
            <person name="Shin M."/>
            <person name="Vergez L."/>
            <person name="Schmutz J."/>
            <person name="Larimer F."/>
            <person name="Land M."/>
            <person name="Hauser L."/>
            <person name="Richardson P."/>
        </authorList>
    </citation>
    <scope>NUCLEOTIDE SEQUENCE [LARGE SCALE GENOMIC DNA]</scope>
    <source>
        <strain>ATCC 25017 / CCUG 19701 / FSC 153 / O#319-036</strain>
    </source>
</reference>
<gene>
    <name evidence="1" type="primary">rplM</name>
    <name type="ordered locus">Fphi_1399</name>
</gene>
<feature type="chain" id="PRO_1000087089" description="Large ribosomal subunit protein uL13">
    <location>
        <begin position="1"/>
        <end position="142"/>
    </location>
</feature>
<dbReference type="EMBL" id="CP000937">
    <property type="protein sequence ID" value="ABZ87624.1"/>
    <property type="molecule type" value="Genomic_DNA"/>
</dbReference>
<dbReference type="SMR" id="B0TYE8"/>
<dbReference type="KEGG" id="fph:Fphi_1399"/>
<dbReference type="eggNOG" id="COG0102">
    <property type="taxonomic scope" value="Bacteria"/>
</dbReference>
<dbReference type="HOGENOM" id="CLU_082184_2_2_6"/>
<dbReference type="GO" id="GO:0022625">
    <property type="term" value="C:cytosolic large ribosomal subunit"/>
    <property type="evidence" value="ECO:0007669"/>
    <property type="project" value="TreeGrafter"/>
</dbReference>
<dbReference type="GO" id="GO:0003729">
    <property type="term" value="F:mRNA binding"/>
    <property type="evidence" value="ECO:0007669"/>
    <property type="project" value="TreeGrafter"/>
</dbReference>
<dbReference type="GO" id="GO:0003735">
    <property type="term" value="F:structural constituent of ribosome"/>
    <property type="evidence" value="ECO:0007669"/>
    <property type="project" value="InterPro"/>
</dbReference>
<dbReference type="GO" id="GO:0017148">
    <property type="term" value="P:negative regulation of translation"/>
    <property type="evidence" value="ECO:0007669"/>
    <property type="project" value="TreeGrafter"/>
</dbReference>
<dbReference type="GO" id="GO:0006412">
    <property type="term" value="P:translation"/>
    <property type="evidence" value="ECO:0007669"/>
    <property type="project" value="UniProtKB-UniRule"/>
</dbReference>
<dbReference type="CDD" id="cd00392">
    <property type="entry name" value="Ribosomal_L13"/>
    <property type="match status" value="1"/>
</dbReference>
<dbReference type="FunFam" id="3.90.1180.10:FF:000001">
    <property type="entry name" value="50S ribosomal protein L13"/>
    <property type="match status" value="1"/>
</dbReference>
<dbReference type="Gene3D" id="3.90.1180.10">
    <property type="entry name" value="Ribosomal protein L13"/>
    <property type="match status" value="1"/>
</dbReference>
<dbReference type="HAMAP" id="MF_01366">
    <property type="entry name" value="Ribosomal_uL13"/>
    <property type="match status" value="1"/>
</dbReference>
<dbReference type="InterPro" id="IPR005822">
    <property type="entry name" value="Ribosomal_uL13"/>
</dbReference>
<dbReference type="InterPro" id="IPR005823">
    <property type="entry name" value="Ribosomal_uL13_bac-type"/>
</dbReference>
<dbReference type="InterPro" id="IPR023563">
    <property type="entry name" value="Ribosomal_uL13_CS"/>
</dbReference>
<dbReference type="InterPro" id="IPR036899">
    <property type="entry name" value="Ribosomal_uL13_sf"/>
</dbReference>
<dbReference type="NCBIfam" id="TIGR01066">
    <property type="entry name" value="rplM_bact"/>
    <property type="match status" value="1"/>
</dbReference>
<dbReference type="PANTHER" id="PTHR11545:SF2">
    <property type="entry name" value="LARGE RIBOSOMAL SUBUNIT PROTEIN UL13M"/>
    <property type="match status" value="1"/>
</dbReference>
<dbReference type="PANTHER" id="PTHR11545">
    <property type="entry name" value="RIBOSOMAL PROTEIN L13"/>
    <property type="match status" value="1"/>
</dbReference>
<dbReference type="Pfam" id="PF00572">
    <property type="entry name" value="Ribosomal_L13"/>
    <property type="match status" value="1"/>
</dbReference>
<dbReference type="PIRSF" id="PIRSF002181">
    <property type="entry name" value="Ribosomal_L13"/>
    <property type="match status" value="1"/>
</dbReference>
<dbReference type="SUPFAM" id="SSF52161">
    <property type="entry name" value="Ribosomal protein L13"/>
    <property type="match status" value="1"/>
</dbReference>
<dbReference type="PROSITE" id="PS00783">
    <property type="entry name" value="RIBOSOMAL_L13"/>
    <property type="match status" value="1"/>
</dbReference>
<name>RL13_FRAP2</name>
<comment type="function">
    <text evidence="1">This protein is one of the early assembly proteins of the 50S ribosomal subunit, although it is not seen to bind rRNA by itself. It is important during the early stages of 50S assembly.</text>
</comment>
<comment type="subunit">
    <text evidence="1">Part of the 50S ribosomal subunit.</text>
</comment>
<comment type="similarity">
    <text evidence="1">Belongs to the universal ribosomal protein uL13 family.</text>
</comment>
<sequence>MKTFTAKPSDIKRQWLLIDATDKTLGRLASEVAMILRGKNKPEYTPSMDTGDYVVIINAEKVAVTGNKRKGKIYHHHTGYIGGIKSISFEKLIATHPERAIEKAVKGMLPRSPLGRAMYKKLKVYAGENHPHTAQQPQAHNI</sequence>
<evidence type="ECO:0000255" key="1">
    <source>
        <dbReference type="HAMAP-Rule" id="MF_01366"/>
    </source>
</evidence>
<evidence type="ECO:0000305" key="2"/>
<protein>
    <recommendedName>
        <fullName evidence="1">Large ribosomal subunit protein uL13</fullName>
    </recommendedName>
    <alternativeName>
        <fullName evidence="2">50S ribosomal protein L13</fullName>
    </alternativeName>
</protein>
<keyword id="KW-0687">Ribonucleoprotein</keyword>
<keyword id="KW-0689">Ribosomal protein</keyword>
<organism>
    <name type="scientific">Francisella philomiragia subsp. philomiragia (strain ATCC 25017 / CCUG 19701 / FSC 153 / O#319-036)</name>
    <dbReference type="NCBI Taxonomy" id="484022"/>
    <lineage>
        <taxon>Bacteria</taxon>
        <taxon>Pseudomonadati</taxon>
        <taxon>Pseudomonadota</taxon>
        <taxon>Gammaproteobacteria</taxon>
        <taxon>Thiotrichales</taxon>
        <taxon>Francisellaceae</taxon>
        <taxon>Francisella</taxon>
    </lineage>
</organism>
<proteinExistence type="inferred from homology"/>